<protein>
    <recommendedName>
        <fullName evidence="1">Large ribosomal subunit protein uL29</fullName>
    </recommendedName>
    <alternativeName>
        <fullName>50S ribosomal protein L29</fullName>
    </alternativeName>
</protein>
<accession>Q9KNZ2</accession>
<dbReference type="EMBL" id="AE003852">
    <property type="protein sequence ID" value="AAF95729.1"/>
    <property type="molecule type" value="Genomic_DNA"/>
</dbReference>
<dbReference type="PIR" id="F82058">
    <property type="entry name" value="F82058"/>
</dbReference>
<dbReference type="RefSeq" id="NP_232216.1">
    <property type="nucleotide sequence ID" value="NC_002505.1"/>
</dbReference>
<dbReference type="RefSeq" id="WP_000647192.1">
    <property type="nucleotide sequence ID" value="NZ_LT906614.1"/>
</dbReference>
<dbReference type="SMR" id="Q9KNZ2"/>
<dbReference type="STRING" id="243277.VC_2588"/>
<dbReference type="DNASU" id="2615605"/>
<dbReference type="EnsemblBacteria" id="AAF95729">
    <property type="protein sequence ID" value="AAF95729"/>
    <property type="gene ID" value="VC_2588"/>
</dbReference>
<dbReference type="GeneID" id="94012760"/>
<dbReference type="KEGG" id="vch:VC_2588"/>
<dbReference type="PATRIC" id="fig|243277.26.peg.2467"/>
<dbReference type="eggNOG" id="COG0255">
    <property type="taxonomic scope" value="Bacteria"/>
</dbReference>
<dbReference type="HOGENOM" id="CLU_158491_1_2_6"/>
<dbReference type="Proteomes" id="UP000000584">
    <property type="component" value="Chromosome 1"/>
</dbReference>
<dbReference type="GO" id="GO:0022625">
    <property type="term" value="C:cytosolic large ribosomal subunit"/>
    <property type="evidence" value="ECO:0000318"/>
    <property type="project" value="GO_Central"/>
</dbReference>
<dbReference type="GO" id="GO:0003735">
    <property type="term" value="F:structural constituent of ribosome"/>
    <property type="evidence" value="ECO:0007669"/>
    <property type="project" value="InterPro"/>
</dbReference>
<dbReference type="GO" id="GO:0006412">
    <property type="term" value="P:translation"/>
    <property type="evidence" value="ECO:0007669"/>
    <property type="project" value="UniProtKB-UniRule"/>
</dbReference>
<dbReference type="CDD" id="cd00427">
    <property type="entry name" value="Ribosomal_L29_HIP"/>
    <property type="match status" value="1"/>
</dbReference>
<dbReference type="FunFam" id="1.10.287.310:FF:000001">
    <property type="entry name" value="50S ribosomal protein L29"/>
    <property type="match status" value="1"/>
</dbReference>
<dbReference type="Gene3D" id="1.10.287.310">
    <property type="match status" value="1"/>
</dbReference>
<dbReference type="HAMAP" id="MF_00374">
    <property type="entry name" value="Ribosomal_uL29"/>
    <property type="match status" value="1"/>
</dbReference>
<dbReference type="InterPro" id="IPR050063">
    <property type="entry name" value="Ribosomal_protein_uL29"/>
</dbReference>
<dbReference type="InterPro" id="IPR001854">
    <property type="entry name" value="Ribosomal_uL29"/>
</dbReference>
<dbReference type="InterPro" id="IPR018254">
    <property type="entry name" value="Ribosomal_uL29_CS"/>
</dbReference>
<dbReference type="InterPro" id="IPR036049">
    <property type="entry name" value="Ribosomal_uL29_sf"/>
</dbReference>
<dbReference type="NCBIfam" id="TIGR00012">
    <property type="entry name" value="L29"/>
    <property type="match status" value="1"/>
</dbReference>
<dbReference type="PANTHER" id="PTHR10916">
    <property type="entry name" value="60S RIBOSOMAL PROTEIN L35/50S RIBOSOMAL PROTEIN L29"/>
    <property type="match status" value="1"/>
</dbReference>
<dbReference type="PANTHER" id="PTHR10916:SF0">
    <property type="entry name" value="LARGE RIBOSOMAL SUBUNIT PROTEIN UL29C"/>
    <property type="match status" value="1"/>
</dbReference>
<dbReference type="Pfam" id="PF00831">
    <property type="entry name" value="Ribosomal_L29"/>
    <property type="match status" value="1"/>
</dbReference>
<dbReference type="SUPFAM" id="SSF46561">
    <property type="entry name" value="Ribosomal protein L29 (L29p)"/>
    <property type="match status" value="1"/>
</dbReference>
<dbReference type="PROSITE" id="PS00579">
    <property type="entry name" value="RIBOSOMAL_L29"/>
    <property type="match status" value="1"/>
</dbReference>
<reference key="1">
    <citation type="journal article" date="2000" name="Nature">
        <title>DNA sequence of both chromosomes of the cholera pathogen Vibrio cholerae.</title>
        <authorList>
            <person name="Heidelberg J.F."/>
            <person name="Eisen J.A."/>
            <person name="Nelson W.C."/>
            <person name="Clayton R.A."/>
            <person name="Gwinn M.L."/>
            <person name="Dodson R.J."/>
            <person name="Haft D.H."/>
            <person name="Hickey E.K."/>
            <person name="Peterson J.D."/>
            <person name="Umayam L.A."/>
            <person name="Gill S.R."/>
            <person name="Nelson K.E."/>
            <person name="Read T.D."/>
            <person name="Tettelin H."/>
            <person name="Richardson D.L."/>
            <person name="Ermolaeva M.D."/>
            <person name="Vamathevan J.J."/>
            <person name="Bass S."/>
            <person name="Qin H."/>
            <person name="Dragoi I."/>
            <person name="Sellers P."/>
            <person name="McDonald L.A."/>
            <person name="Utterback T.R."/>
            <person name="Fleischmann R.D."/>
            <person name="Nierman W.C."/>
            <person name="White O."/>
            <person name="Salzberg S.L."/>
            <person name="Smith H.O."/>
            <person name="Colwell R.R."/>
            <person name="Mekalanos J.J."/>
            <person name="Venter J.C."/>
            <person name="Fraser C.M."/>
        </authorList>
    </citation>
    <scope>NUCLEOTIDE SEQUENCE [LARGE SCALE GENOMIC DNA]</scope>
    <source>
        <strain>ATCC 39315 / El Tor Inaba N16961</strain>
    </source>
</reference>
<comment type="similarity">
    <text evidence="1">Belongs to the universal ribosomal protein uL29 family.</text>
</comment>
<organism>
    <name type="scientific">Vibrio cholerae serotype O1 (strain ATCC 39315 / El Tor Inaba N16961)</name>
    <dbReference type="NCBI Taxonomy" id="243277"/>
    <lineage>
        <taxon>Bacteria</taxon>
        <taxon>Pseudomonadati</taxon>
        <taxon>Pseudomonadota</taxon>
        <taxon>Gammaproteobacteria</taxon>
        <taxon>Vibrionales</taxon>
        <taxon>Vibrionaceae</taxon>
        <taxon>Vibrio</taxon>
    </lineage>
</organism>
<evidence type="ECO:0000305" key="1"/>
<proteinExistence type="inferred from homology"/>
<feature type="chain" id="PRO_0000130491" description="Large ribosomal subunit protein uL29">
    <location>
        <begin position="1"/>
        <end position="63"/>
    </location>
</feature>
<keyword id="KW-1185">Reference proteome</keyword>
<keyword id="KW-0687">Ribonucleoprotein</keyword>
<keyword id="KW-0689">Ribosomal protein</keyword>
<sequence length="63" mass="7163">MKAQDLREKSVEELNSELLNLLKEQFNLRMQAATGQLQQTHTLKAVRRDIARVKTVLTEKAGA</sequence>
<name>RL29_VIBCH</name>
<gene>
    <name type="primary">rpmC</name>
    <name type="ordered locus">VC_2588</name>
</gene>